<gene>
    <name evidence="1" type="primary">secM</name>
    <name type="ordered locus">YpsIP31758_3379</name>
</gene>
<dbReference type="EMBL" id="CP000720">
    <property type="protein sequence ID" value="ABS46670.1"/>
    <property type="molecule type" value="Genomic_DNA"/>
</dbReference>
<dbReference type="RefSeq" id="WP_011191738.1">
    <property type="nucleotide sequence ID" value="NC_009708.1"/>
</dbReference>
<dbReference type="KEGG" id="ypi:YpsIP31758_3379"/>
<dbReference type="HOGENOM" id="CLU_108853_0_0_6"/>
<dbReference type="Proteomes" id="UP000002412">
    <property type="component" value="Chromosome"/>
</dbReference>
<dbReference type="GO" id="GO:0005829">
    <property type="term" value="C:cytosol"/>
    <property type="evidence" value="ECO:0007669"/>
    <property type="project" value="UniProtKB-SubCell"/>
</dbReference>
<dbReference type="GO" id="GO:0042597">
    <property type="term" value="C:periplasmic space"/>
    <property type="evidence" value="ECO:0007669"/>
    <property type="project" value="UniProtKB-SubCell"/>
</dbReference>
<dbReference type="GO" id="GO:0045182">
    <property type="term" value="F:translation regulator activity"/>
    <property type="evidence" value="ECO:0007669"/>
    <property type="project" value="InterPro"/>
</dbReference>
<dbReference type="HAMAP" id="MF_01332">
    <property type="entry name" value="SecM"/>
    <property type="match status" value="1"/>
</dbReference>
<dbReference type="InterPro" id="IPR009502">
    <property type="entry name" value="SecM"/>
</dbReference>
<dbReference type="NCBIfam" id="NF002799">
    <property type="entry name" value="PRK02943.1-1"/>
    <property type="match status" value="1"/>
</dbReference>
<dbReference type="Pfam" id="PF06558">
    <property type="entry name" value="SecM"/>
    <property type="match status" value="1"/>
</dbReference>
<dbReference type="PIRSF" id="PIRSF004572">
    <property type="entry name" value="SecM"/>
    <property type="match status" value="1"/>
</dbReference>
<sequence length="177" mass="19805">MIGILNRWRQFGRRYFWPHLLLGMVAASLGVPSNLSGVPDHAALANTSSSQSRQNHGTTNFNSLALLHDIHRRPSFSVDYWQQHALRTVIRHLSFALAPQAAYARVQEVAETERVAPSKIQQLALLDTLNALLTHEFKPPAIIRYTEQVERPVLSPYKPGLWLAQVQGIRAGPANLS</sequence>
<organism>
    <name type="scientific">Yersinia pseudotuberculosis serotype O:1b (strain IP 31758)</name>
    <dbReference type="NCBI Taxonomy" id="349747"/>
    <lineage>
        <taxon>Bacteria</taxon>
        <taxon>Pseudomonadati</taxon>
        <taxon>Pseudomonadota</taxon>
        <taxon>Gammaproteobacteria</taxon>
        <taxon>Enterobacterales</taxon>
        <taxon>Yersiniaceae</taxon>
        <taxon>Yersinia</taxon>
    </lineage>
</organism>
<comment type="function">
    <text evidence="1">Regulates secA expression by translational coupling of the secM secA operon. Translational pausing at a specific Pro residue 5 residues before the end of the protein may allow disruption of a mRNA repressor helix that normally suppresses secA translation initiation.</text>
</comment>
<comment type="subcellular location">
    <subcellularLocation>
        <location evidence="1">Cytoplasm</location>
        <location evidence="1">Cytosol</location>
    </subcellularLocation>
    <subcellularLocation>
        <location evidence="1">Periplasm</location>
    </subcellularLocation>
    <text evidence="1">The active form is cytosolic, while the periplasmic form is rapidly degraded, mainly by the tail-specific protease.</text>
</comment>
<comment type="similarity">
    <text evidence="1">Belongs to the SecM family.</text>
</comment>
<evidence type="ECO:0000255" key="1">
    <source>
        <dbReference type="HAMAP-Rule" id="MF_01332"/>
    </source>
</evidence>
<keyword id="KW-0963">Cytoplasm</keyword>
<keyword id="KW-0574">Periplasm</keyword>
<keyword id="KW-0732">Signal</keyword>
<reference key="1">
    <citation type="journal article" date="2007" name="PLoS Genet.">
        <title>The complete genome sequence of Yersinia pseudotuberculosis IP31758, the causative agent of Far East scarlet-like fever.</title>
        <authorList>
            <person name="Eppinger M."/>
            <person name="Rosovitz M.J."/>
            <person name="Fricke W.F."/>
            <person name="Rasko D.A."/>
            <person name="Kokorina G."/>
            <person name="Fayolle C."/>
            <person name="Lindler L.E."/>
            <person name="Carniel E."/>
            <person name="Ravel J."/>
        </authorList>
    </citation>
    <scope>NUCLEOTIDE SEQUENCE [LARGE SCALE GENOMIC DNA]</scope>
    <source>
        <strain>IP 31758</strain>
    </source>
</reference>
<feature type="signal peptide" evidence="1">
    <location>
        <begin position="1"/>
        <end position="37"/>
    </location>
</feature>
<feature type="chain" id="PRO_1000067614" description="Secretion monitor">
    <location>
        <begin position="38"/>
        <end position="177"/>
    </location>
</feature>
<proteinExistence type="inferred from homology"/>
<protein>
    <recommendedName>
        <fullName evidence="1">Secretion monitor</fullName>
    </recommendedName>
</protein>
<accession>A7FM58</accession>
<name>SECM_YERP3</name>